<evidence type="ECO:0000255" key="1">
    <source>
        <dbReference type="HAMAP-Rule" id="MF_02127"/>
    </source>
</evidence>
<feature type="chain" id="PRO_0000414829" description="Glucose 1-dehydrogenase 2">
    <location>
        <begin position="1"/>
        <end position="366"/>
    </location>
</feature>
<feature type="binding site" evidence="1">
    <location>
        <position position="39"/>
    </location>
    <ligand>
        <name>Zn(2+)</name>
        <dbReference type="ChEBI" id="CHEBI:29105"/>
        <note>catalytic</note>
    </ligand>
</feature>
<feature type="binding site" evidence="1">
    <location>
        <position position="41"/>
    </location>
    <ligand>
        <name>substrate</name>
    </ligand>
</feature>
<feature type="binding site" evidence="1">
    <location>
        <position position="66"/>
    </location>
    <ligand>
        <name>Zn(2+)</name>
        <dbReference type="ChEBI" id="CHEBI:29105"/>
        <note>catalytic</note>
    </ligand>
</feature>
<feature type="binding site" evidence="1">
    <location>
        <position position="67"/>
    </location>
    <ligand>
        <name>Zn(2+)</name>
        <dbReference type="ChEBI" id="CHEBI:29105"/>
        <note>catalytic</note>
    </ligand>
</feature>
<feature type="binding site" evidence="1">
    <location>
        <position position="90"/>
    </location>
    <ligand>
        <name>substrate</name>
    </ligand>
</feature>
<feature type="binding site" evidence="1">
    <location>
        <position position="116"/>
    </location>
    <ligand>
        <name>substrate</name>
    </ligand>
</feature>
<feature type="binding site" evidence="1">
    <location>
        <position position="152"/>
    </location>
    <ligand>
        <name>substrate</name>
    </ligand>
</feature>
<feature type="binding site" evidence="1">
    <location>
        <position position="152"/>
    </location>
    <ligand>
        <name>Zn(2+)</name>
        <dbReference type="ChEBI" id="CHEBI:29105"/>
        <note>catalytic</note>
    </ligand>
</feature>
<feature type="binding site" evidence="1">
    <location>
        <position position="156"/>
    </location>
    <ligand>
        <name>substrate</name>
    </ligand>
</feature>
<feature type="binding site" evidence="1">
    <location>
        <begin position="212"/>
        <end position="214"/>
    </location>
    <ligand>
        <name>NADP(+)</name>
        <dbReference type="ChEBI" id="CHEBI:58349"/>
    </ligand>
</feature>
<feature type="binding site" evidence="1">
    <location>
        <begin position="277"/>
        <end position="279"/>
    </location>
    <ligand>
        <name>NADP(+)</name>
        <dbReference type="ChEBI" id="CHEBI:58349"/>
    </ligand>
</feature>
<feature type="binding site" evidence="1">
    <location>
        <begin position="305"/>
        <end position="307"/>
    </location>
    <ligand>
        <name>NADP(+)</name>
        <dbReference type="ChEBI" id="CHEBI:58349"/>
    </ligand>
</feature>
<feature type="binding site" evidence="1">
    <location>
        <position position="307"/>
    </location>
    <ligand>
        <name>substrate</name>
    </ligand>
</feature>
<feature type="binding site" evidence="1">
    <location>
        <position position="354"/>
    </location>
    <ligand>
        <name>NADP(+)</name>
        <dbReference type="ChEBI" id="CHEBI:58349"/>
    </ligand>
</feature>
<comment type="function">
    <text evidence="1">Catalyzes the NAD(P)(+)-dependent oxidation of D-glucose to D-gluconate via gluconolactone. Can utilize both NAD(+) and NADP(+) as electron acceptor. Is involved in the degradation of glucose through a non-phosphorylative variant of the Entner-Doudoroff pathway.</text>
</comment>
<comment type="catalytic activity">
    <reaction evidence="1">
        <text>D-glucose + NAD(+) = D-glucono-1,5-lactone + NADH + H(+)</text>
        <dbReference type="Rhea" id="RHEA:14293"/>
        <dbReference type="ChEBI" id="CHEBI:4167"/>
        <dbReference type="ChEBI" id="CHEBI:15378"/>
        <dbReference type="ChEBI" id="CHEBI:16217"/>
        <dbReference type="ChEBI" id="CHEBI:57540"/>
        <dbReference type="ChEBI" id="CHEBI:57945"/>
        <dbReference type="EC" id="1.1.1.47"/>
    </reaction>
</comment>
<comment type="catalytic activity">
    <reaction evidence="1">
        <text>D-glucose + NADP(+) = D-glucono-1,5-lactone + NADPH + H(+)</text>
        <dbReference type="Rhea" id="RHEA:14405"/>
        <dbReference type="ChEBI" id="CHEBI:4167"/>
        <dbReference type="ChEBI" id="CHEBI:15378"/>
        <dbReference type="ChEBI" id="CHEBI:16217"/>
        <dbReference type="ChEBI" id="CHEBI:57783"/>
        <dbReference type="ChEBI" id="CHEBI:58349"/>
        <dbReference type="EC" id="1.1.1.47"/>
    </reaction>
</comment>
<comment type="cofactor">
    <cofactor evidence="1">
        <name>Zn(2+)</name>
        <dbReference type="ChEBI" id="CHEBI:29105"/>
    </cofactor>
</comment>
<comment type="similarity">
    <text evidence="1">Belongs to the zinc-containing alcohol dehydrogenase family. Glucose 1-dehydrogenase subfamily.</text>
</comment>
<protein>
    <recommendedName>
        <fullName evidence="1">Glucose 1-dehydrogenase 2</fullName>
        <shortName evidence="1">GDH 2</shortName>
        <shortName evidence="1">GlcDH 2</shortName>
        <ecNumber evidence="1">1.1.1.47</ecNumber>
    </recommendedName>
</protein>
<keyword id="KW-0119">Carbohydrate metabolism</keyword>
<keyword id="KW-0479">Metal-binding</keyword>
<keyword id="KW-0520">NAD</keyword>
<keyword id="KW-0521">NADP</keyword>
<keyword id="KW-0547">Nucleotide-binding</keyword>
<keyword id="KW-0560">Oxidoreductase</keyword>
<keyword id="KW-1185">Reference proteome</keyword>
<keyword id="KW-0862">Zinc</keyword>
<organism>
    <name type="scientific">Caldivirga maquilingensis (strain ATCC 700844 / DSM 13496 / JCM 10307 / IC-167)</name>
    <dbReference type="NCBI Taxonomy" id="397948"/>
    <lineage>
        <taxon>Archaea</taxon>
        <taxon>Thermoproteota</taxon>
        <taxon>Thermoprotei</taxon>
        <taxon>Thermoproteales</taxon>
        <taxon>Thermoproteaceae</taxon>
        <taxon>Caldivirga</taxon>
    </lineage>
</organism>
<dbReference type="EC" id="1.1.1.47" evidence="1"/>
<dbReference type="EMBL" id="CP000852">
    <property type="protein sequence ID" value="ABW02537.1"/>
    <property type="molecule type" value="Genomic_DNA"/>
</dbReference>
<dbReference type="RefSeq" id="WP_012186756.1">
    <property type="nucleotide sequence ID" value="NC_009954.1"/>
</dbReference>
<dbReference type="SMR" id="A8MAG0"/>
<dbReference type="STRING" id="397948.Cmaq_1714"/>
<dbReference type="GeneID" id="5709413"/>
<dbReference type="KEGG" id="cma:Cmaq_1714"/>
<dbReference type="eggNOG" id="arCOG01459">
    <property type="taxonomic scope" value="Archaea"/>
</dbReference>
<dbReference type="HOGENOM" id="CLU_026673_1_0_2"/>
<dbReference type="OrthoDB" id="41394at2157"/>
<dbReference type="Proteomes" id="UP000001137">
    <property type="component" value="Chromosome"/>
</dbReference>
<dbReference type="GO" id="GO:0005536">
    <property type="term" value="F:D-glucose binding"/>
    <property type="evidence" value="ECO:0007669"/>
    <property type="project" value="UniProtKB-UniRule"/>
</dbReference>
<dbReference type="GO" id="GO:0047934">
    <property type="term" value="F:glucose 1-dehydrogenase (NAD+) activity"/>
    <property type="evidence" value="ECO:0007669"/>
    <property type="project" value="RHEA"/>
</dbReference>
<dbReference type="GO" id="GO:0047935">
    <property type="term" value="F:glucose 1-dehydrogenase (NADP+) activity"/>
    <property type="evidence" value="ECO:0007669"/>
    <property type="project" value="RHEA"/>
</dbReference>
<dbReference type="GO" id="GO:0070403">
    <property type="term" value="F:NAD+ binding"/>
    <property type="evidence" value="ECO:0007669"/>
    <property type="project" value="UniProtKB-UniRule"/>
</dbReference>
<dbReference type="GO" id="GO:0070401">
    <property type="term" value="F:NADP+ binding"/>
    <property type="evidence" value="ECO:0007669"/>
    <property type="project" value="UniProtKB-UniRule"/>
</dbReference>
<dbReference type="GO" id="GO:0008270">
    <property type="term" value="F:zinc ion binding"/>
    <property type="evidence" value="ECO:0007669"/>
    <property type="project" value="UniProtKB-UniRule"/>
</dbReference>
<dbReference type="GO" id="GO:0019595">
    <property type="term" value="P:non-phosphorylated glucose catabolic process"/>
    <property type="evidence" value="ECO:0007669"/>
    <property type="project" value="UniProtKB-UniRule"/>
</dbReference>
<dbReference type="GO" id="GO:0051262">
    <property type="term" value="P:protein tetramerization"/>
    <property type="evidence" value="ECO:0007669"/>
    <property type="project" value="UniProtKB-ARBA"/>
</dbReference>
<dbReference type="CDD" id="cd08230">
    <property type="entry name" value="glucose_DH"/>
    <property type="match status" value="1"/>
</dbReference>
<dbReference type="Gene3D" id="3.90.180.10">
    <property type="entry name" value="Medium-chain alcohol dehydrogenases, catalytic domain"/>
    <property type="match status" value="1"/>
</dbReference>
<dbReference type="Gene3D" id="3.40.50.720">
    <property type="entry name" value="NAD(P)-binding Rossmann-like Domain"/>
    <property type="match status" value="1"/>
</dbReference>
<dbReference type="HAMAP" id="MF_02127">
    <property type="entry name" value="Glucose_DH"/>
    <property type="match status" value="1"/>
</dbReference>
<dbReference type="InterPro" id="IPR013154">
    <property type="entry name" value="ADH-like_N"/>
</dbReference>
<dbReference type="InterPro" id="IPR026583">
    <property type="entry name" value="Glc_1-DH_arc"/>
</dbReference>
<dbReference type="InterPro" id="IPR031640">
    <property type="entry name" value="Glu_dehyd_C"/>
</dbReference>
<dbReference type="InterPro" id="IPR011032">
    <property type="entry name" value="GroES-like_sf"/>
</dbReference>
<dbReference type="InterPro" id="IPR036291">
    <property type="entry name" value="NAD(P)-bd_dom_sf"/>
</dbReference>
<dbReference type="InterPro" id="IPR050129">
    <property type="entry name" value="Zn_alcohol_dh"/>
</dbReference>
<dbReference type="PANTHER" id="PTHR43401">
    <property type="entry name" value="L-THREONINE 3-DEHYDROGENASE"/>
    <property type="match status" value="1"/>
</dbReference>
<dbReference type="PANTHER" id="PTHR43401:SF2">
    <property type="entry name" value="L-THREONINE 3-DEHYDROGENASE"/>
    <property type="match status" value="1"/>
</dbReference>
<dbReference type="Pfam" id="PF08240">
    <property type="entry name" value="ADH_N"/>
    <property type="match status" value="1"/>
</dbReference>
<dbReference type="Pfam" id="PF16912">
    <property type="entry name" value="Glu_dehyd_C"/>
    <property type="match status" value="1"/>
</dbReference>
<dbReference type="SUPFAM" id="SSF50129">
    <property type="entry name" value="GroES-like"/>
    <property type="match status" value="1"/>
</dbReference>
<dbReference type="SUPFAM" id="SSF51735">
    <property type="entry name" value="NAD(P)-binding Rossmann-fold domains"/>
    <property type="match status" value="1"/>
</dbReference>
<sequence length="366" mass="40916">MKAIVVKPPKPGVEVRDLSQVIRHGSGTVKVRILENGICGSDREIVKGELTTARPPEGRDWLVLGHEALGIVEDSSDPRFKPGDLVMPINRRSYHGKCLNCLVGRPDFCEANEFVEAGMVGMDGFMVEYWYDDPKYLVKVPKDIADIAIVAQPLSDLEKSVEEILNVQRRFIWTCDDGTYNCRRSIVFGTGSTGILISLLLRTVGFEVYVANRRDPLESEAKITEEAGIIYYNYSKDGLDKLKSMGFDLVVDTTGASASLIGHEVEMLKPNGILGLFGFPSEGELTLRYDVIQRFIYKSNAIVGLINGQKPHFQQALAHLAQWKVVWPTVAKSLITRVVDVNNDKELLQVLNHKERGEIKVKIKWS</sequence>
<name>GLCD2_CALMQ</name>
<reference key="1">
    <citation type="submission" date="2007-10" db="EMBL/GenBank/DDBJ databases">
        <title>Complete sequence of Caldivirga maquilingensis IC-167.</title>
        <authorList>
            <consortium name="US DOE Joint Genome Institute"/>
            <person name="Copeland A."/>
            <person name="Lucas S."/>
            <person name="Lapidus A."/>
            <person name="Barry K."/>
            <person name="Glavina del Rio T."/>
            <person name="Dalin E."/>
            <person name="Tice H."/>
            <person name="Pitluck S."/>
            <person name="Saunders E."/>
            <person name="Brettin T."/>
            <person name="Bruce D."/>
            <person name="Detter J.C."/>
            <person name="Han C."/>
            <person name="Schmutz J."/>
            <person name="Larimer F."/>
            <person name="Land M."/>
            <person name="Hauser L."/>
            <person name="Kyrpides N."/>
            <person name="Ivanova N."/>
            <person name="Biddle J.F."/>
            <person name="Zhang Z."/>
            <person name="Fitz-Gibbon S.T."/>
            <person name="Lowe T.M."/>
            <person name="Saltikov C."/>
            <person name="House C.H."/>
            <person name="Richardson P."/>
        </authorList>
    </citation>
    <scope>NUCLEOTIDE SEQUENCE [LARGE SCALE GENOMIC DNA]</scope>
    <source>
        <strain>ATCC 700844 / DSM 13496 / JCM 10307 / IC-167</strain>
    </source>
</reference>
<gene>
    <name evidence="1" type="primary">gdh2</name>
    <name type="ordered locus">Cmaq_1714</name>
</gene>
<proteinExistence type="inferred from homology"/>
<accession>A8MAG0</accession>